<name>Y209_RICCN</name>
<comment type="similarity">
    <text evidence="2">Belongs to the SDHAF4 family.</text>
</comment>
<feature type="chain" id="PRO_0000244342" description="UPF0369 protein RC0209">
    <location>
        <begin position="1"/>
        <end position="93"/>
    </location>
</feature>
<feature type="domain" description="RPE1 insert">
    <location>
        <begin position="8"/>
        <end position="55"/>
    </location>
</feature>
<feature type="region of interest" description="Disordered" evidence="1">
    <location>
        <begin position="1"/>
        <end position="24"/>
    </location>
</feature>
<protein>
    <recommendedName>
        <fullName>UPF0369 protein RC0209</fullName>
    </recommendedName>
</protein>
<gene>
    <name type="ordered locus">RC0209</name>
</gene>
<sequence>MDDKKDNRHLSKPAYREECTGDTERSTTAYMDILEDVSTGSTSKLPLEAKFVKISNNISEKENLPKEKEIGGVKGLEPTRYGDWQHKGKVTDF</sequence>
<proteinExistence type="inferred from homology"/>
<reference key="1">
    <citation type="journal article" date="2001" name="Science">
        <title>Mechanisms of evolution in Rickettsia conorii and R. prowazekii.</title>
        <authorList>
            <person name="Ogata H."/>
            <person name="Audic S."/>
            <person name="Renesto-Audiffren P."/>
            <person name="Fournier P.-E."/>
            <person name="Barbe V."/>
            <person name="Samson D."/>
            <person name="Roux V."/>
            <person name="Cossart P."/>
            <person name="Weissenbach J."/>
            <person name="Claverie J.-M."/>
            <person name="Raoult D."/>
        </authorList>
    </citation>
    <scope>NUCLEOTIDE SEQUENCE [LARGE SCALE GENOMIC DNA]</scope>
    <source>
        <strain>ATCC VR-613 / Malish 7</strain>
    </source>
</reference>
<evidence type="ECO:0000256" key="1">
    <source>
        <dbReference type="SAM" id="MobiDB-lite"/>
    </source>
</evidence>
<evidence type="ECO:0000305" key="2"/>
<dbReference type="EMBL" id="AE006914">
    <property type="protein sequence ID" value="AAL02747.1"/>
    <property type="molecule type" value="Genomic_DNA"/>
</dbReference>
<dbReference type="PIR" id="A97726">
    <property type="entry name" value="A97726"/>
</dbReference>
<dbReference type="RefSeq" id="WP_010976875.1">
    <property type="nucleotide sequence ID" value="NC_003103.1"/>
</dbReference>
<dbReference type="SMR" id="Q92J60"/>
<dbReference type="GeneID" id="927977"/>
<dbReference type="KEGG" id="rco:RC0209"/>
<dbReference type="PATRIC" id="fig|272944.4.peg.239"/>
<dbReference type="HOGENOM" id="CLU_186138_0_0_5"/>
<dbReference type="Proteomes" id="UP000000816">
    <property type="component" value="Chromosome"/>
</dbReference>
<dbReference type="InterPro" id="IPR005728">
    <property type="entry name" value="RPE1"/>
</dbReference>
<dbReference type="InterPro" id="IPR012875">
    <property type="entry name" value="SDHF4"/>
</dbReference>
<dbReference type="NCBIfam" id="TIGR01045">
    <property type="entry name" value="RPE1"/>
    <property type="match status" value="1"/>
</dbReference>
<dbReference type="Pfam" id="PF07896">
    <property type="entry name" value="DUF1674"/>
    <property type="match status" value="1"/>
</dbReference>
<organism>
    <name type="scientific">Rickettsia conorii (strain ATCC VR-613 / Malish 7)</name>
    <dbReference type="NCBI Taxonomy" id="272944"/>
    <lineage>
        <taxon>Bacteria</taxon>
        <taxon>Pseudomonadati</taxon>
        <taxon>Pseudomonadota</taxon>
        <taxon>Alphaproteobacteria</taxon>
        <taxon>Rickettsiales</taxon>
        <taxon>Rickettsiaceae</taxon>
        <taxon>Rickettsieae</taxon>
        <taxon>Rickettsia</taxon>
        <taxon>spotted fever group</taxon>
    </lineage>
</organism>
<accession>Q92J60</accession>